<feature type="chain" id="PRO_0000146490" description="Small ribosomal subunit protein uS10">
    <location>
        <begin position="1"/>
        <end position="102"/>
    </location>
</feature>
<accession>Q73F97</accession>
<reference key="1">
    <citation type="journal article" date="2004" name="Nucleic Acids Res.">
        <title>The genome sequence of Bacillus cereus ATCC 10987 reveals metabolic adaptations and a large plasmid related to Bacillus anthracis pXO1.</title>
        <authorList>
            <person name="Rasko D.A."/>
            <person name="Ravel J."/>
            <person name="Oekstad O.A."/>
            <person name="Helgason E."/>
            <person name="Cer R.Z."/>
            <person name="Jiang L."/>
            <person name="Shores K.A."/>
            <person name="Fouts D.E."/>
            <person name="Tourasse N.J."/>
            <person name="Angiuoli S.V."/>
            <person name="Kolonay J.F."/>
            <person name="Nelson W.C."/>
            <person name="Kolstoe A.-B."/>
            <person name="Fraser C.M."/>
            <person name="Read T.D."/>
        </authorList>
    </citation>
    <scope>NUCLEOTIDE SEQUENCE [LARGE SCALE GENOMIC DNA]</scope>
    <source>
        <strain>ATCC 10987 / NRS 248</strain>
    </source>
</reference>
<protein>
    <recommendedName>
        <fullName evidence="1">Small ribosomal subunit protein uS10</fullName>
    </recommendedName>
    <alternativeName>
        <fullName evidence="2">30S ribosomal protein S10</fullName>
    </alternativeName>
</protein>
<organism>
    <name type="scientific">Bacillus cereus (strain ATCC 10987 / NRS 248)</name>
    <dbReference type="NCBI Taxonomy" id="222523"/>
    <lineage>
        <taxon>Bacteria</taxon>
        <taxon>Bacillati</taxon>
        <taxon>Bacillota</taxon>
        <taxon>Bacilli</taxon>
        <taxon>Bacillales</taxon>
        <taxon>Bacillaceae</taxon>
        <taxon>Bacillus</taxon>
        <taxon>Bacillus cereus group</taxon>
    </lineage>
</organism>
<sequence length="102" mass="11698">MAKEKIRIRLKAYDHRILDQSAEKIVETAKRSGATVSGPIPLPTEKTVYTILRAVHKYKDSREQFEMRTHKRLIDIVSPTPQTVDSLMRLDLXSGVDIEIKL</sequence>
<dbReference type="EMBL" id="AE017194">
    <property type="protein sequence ID" value="AAS39045.1"/>
    <property type="molecule type" value="Genomic_DNA"/>
</dbReference>
<dbReference type="KEGG" id="bca:BCE_0109"/>
<dbReference type="HOGENOM" id="CLU_122625_1_3_9"/>
<dbReference type="Proteomes" id="UP000002527">
    <property type="component" value="Chromosome"/>
</dbReference>
<dbReference type="GO" id="GO:1990904">
    <property type="term" value="C:ribonucleoprotein complex"/>
    <property type="evidence" value="ECO:0007669"/>
    <property type="project" value="UniProtKB-KW"/>
</dbReference>
<dbReference type="GO" id="GO:0005840">
    <property type="term" value="C:ribosome"/>
    <property type="evidence" value="ECO:0007669"/>
    <property type="project" value="UniProtKB-KW"/>
</dbReference>
<dbReference type="GO" id="GO:0003735">
    <property type="term" value="F:structural constituent of ribosome"/>
    <property type="evidence" value="ECO:0007669"/>
    <property type="project" value="InterPro"/>
</dbReference>
<dbReference type="GO" id="GO:0000049">
    <property type="term" value="F:tRNA binding"/>
    <property type="evidence" value="ECO:0007669"/>
    <property type="project" value="UniProtKB-UniRule"/>
</dbReference>
<dbReference type="GO" id="GO:0006412">
    <property type="term" value="P:translation"/>
    <property type="evidence" value="ECO:0007669"/>
    <property type="project" value="UniProtKB-UniRule"/>
</dbReference>
<dbReference type="FunFam" id="3.30.70.600:FF:000001">
    <property type="entry name" value="30S ribosomal protein S10"/>
    <property type="match status" value="1"/>
</dbReference>
<dbReference type="Gene3D" id="3.30.70.600">
    <property type="entry name" value="Ribosomal protein S10 domain"/>
    <property type="match status" value="1"/>
</dbReference>
<dbReference type="HAMAP" id="MF_00508">
    <property type="entry name" value="Ribosomal_uS10"/>
    <property type="match status" value="1"/>
</dbReference>
<dbReference type="InterPro" id="IPR001848">
    <property type="entry name" value="Ribosomal_uS10"/>
</dbReference>
<dbReference type="InterPro" id="IPR018268">
    <property type="entry name" value="Ribosomal_uS10_CS"/>
</dbReference>
<dbReference type="InterPro" id="IPR027486">
    <property type="entry name" value="Ribosomal_uS10_dom"/>
</dbReference>
<dbReference type="InterPro" id="IPR036838">
    <property type="entry name" value="Ribosomal_uS10_dom_sf"/>
</dbReference>
<dbReference type="NCBIfam" id="NF001861">
    <property type="entry name" value="PRK00596.1"/>
    <property type="match status" value="1"/>
</dbReference>
<dbReference type="NCBIfam" id="TIGR01049">
    <property type="entry name" value="rpsJ_bact"/>
    <property type="match status" value="1"/>
</dbReference>
<dbReference type="PANTHER" id="PTHR11700">
    <property type="entry name" value="30S RIBOSOMAL PROTEIN S10 FAMILY MEMBER"/>
    <property type="match status" value="1"/>
</dbReference>
<dbReference type="Pfam" id="PF00338">
    <property type="entry name" value="Ribosomal_S10"/>
    <property type="match status" value="1"/>
</dbReference>
<dbReference type="PRINTS" id="PR00971">
    <property type="entry name" value="RIBOSOMALS10"/>
</dbReference>
<dbReference type="SMART" id="SM01403">
    <property type="entry name" value="Ribosomal_S10"/>
    <property type="match status" value="1"/>
</dbReference>
<dbReference type="SUPFAM" id="SSF54999">
    <property type="entry name" value="Ribosomal protein S10"/>
    <property type="match status" value="1"/>
</dbReference>
<dbReference type="PROSITE" id="PS00361">
    <property type="entry name" value="RIBOSOMAL_S10"/>
    <property type="match status" value="1"/>
</dbReference>
<name>RS10_BACC1</name>
<gene>
    <name evidence="1" type="primary">rpsJ</name>
    <name type="ordered locus">BCE_0109</name>
</gene>
<evidence type="ECO:0000255" key="1">
    <source>
        <dbReference type="HAMAP-Rule" id="MF_00508"/>
    </source>
</evidence>
<evidence type="ECO:0000305" key="2"/>
<keyword id="KW-0687">Ribonucleoprotein</keyword>
<keyword id="KW-0689">Ribosomal protein</keyword>
<proteinExistence type="inferred from homology"/>
<comment type="function">
    <text evidence="1">Involved in the binding of tRNA to the ribosomes.</text>
</comment>
<comment type="subunit">
    <text evidence="1">Part of the 30S ribosomal subunit.</text>
</comment>
<comment type="similarity">
    <text evidence="1">Belongs to the universal ribosomal protein uS10 family.</text>
</comment>